<feature type="initiator methionine" description="Removed" evidence="2">
    <location>
        <position position="1"/>
    </location>
</feature>
<feature type="chain" id="PRO_0000284545" description="Vacuole membrane protein 1">
    <location>
        <begin position="2"/>
        <end position="406"/>
    </location>
</feature>
<feature type="topological domain" description="Cytoplasmic" evidence="3">
    <location>
        <begin position="2"/>
        <end position="43"/>
    </location>
</feature>
<feature type="transmembrane region" description="Helical" evidence="3">
    <location>
        <begin position="44"/>
        <end position="63"/>
    </location>
</feature>
<feature type="topological domain" description="Extracellular" evidence="3">
    <location>
        <begin position="64"/>
        <end position="77"/>
    </location>
</feature>
<feature type="transmembrane region" description="Helical" evidence="3">
    <location>
        <begin position="78"/>
        <end position="98"/>
    </location>
</feature>
<feature type="topological domain" description="Cytoplasmic" evidence="3">
    <location>
        <begin position="99"/>
        <end position="109"/>
    </location>
</feature>
<feature type="transmembrane region" description="Helical" evidence="3">
    <location>
        <begin position="110"/>
        <end position="130"/>
    </location>
</feature>
<feature type="topological domain" description="Extracellular" evidence="3">
    <location>
        <begin position="131"/>
        <end position="250"/>
    </location>
</feature>
<feature type="transmembrane region" description="Helical" evidence="3">
    <location>
        <begin position="251"/>
        <end position="271"/>
    </location>
</feature>
<feature type="topological domain" description="Cytoplasmic" evidence="3">
    <location>
        <begin position="272"/>
        <end position="273"/>
    </location>
</feature>
<feature type="transmembrane region" description="Helical" evidence="3">
    <location>
        <begin position="274"/>
        <end position="294"/>
    </location>
</feature>
<feature type="topological domain" description="Extracellular" evidence="3">
    <location>
        <begin position="295"/>
        <end position="306"/>
    </location>
</feature>
<feature type="transmembrane region" description="Helical" evidence="3">
    <location>
        <begin position="307"/>
        <end position="327"/>
    </location>
</feature>
<feature type="topological domain" description="Cytoplasmic" evidence="3">
    <location>
        <begin position="328"/>
        <end position="363"/>
    </location>
</feature>
<feature type="transmembrane region" description="Helical" evidence="3">
    <location>
        <begin position="364"/>
        <end position="384"/>
    </location>
</feature>
<feature type="topological domain" description="Extracellular" evidence="3">
    <location>
        <begin position="385"/>
        <end position="406"/>
    </location>
</feature>
<feature type="region of interest" description="VTT domain" evidence="2">
    <location>
        <begin position="173"/>
        <end position="316"/>
    </location>
</feature>
<feature type="modified residue" description="N-acetylalanine" evidence="2">
    <location>
        <position position="2"/>
    </location>
</feature>
<gene>
    <name evidence="2" type="primary">VMP1</name>
</gene>
<name>VMP1_BOVIN</name>
<sequence>MAENGQNCDQRRVAMNKEQYNGNFTDPSSVNEKKRRDREERQNIVLWRQPLITLQYFSLETLVILKEWTSKLWHRQSIVVSFLLLLAVLTATYYVEGAHQQYVQRIEKQFLLYAYWIGLGILSSVGLGTGLHTFLLYLGPHIASVTLAAYECNSVNFPEPPYPDQIICPDEEGTEGTISLWSIISKVRIEACMWGIGTAIGELPPYFMARAARLSGAEPDDEEYQEFEEMLEHAETAQDFASRAKLAVQNLVQKVGFFGILACASIPNPLFDLAGITCGHFLVPFWTFFGATLIGKAIIKMHIQKLFVIVAFSKHIVEQMVAFIGAVPGIGPSLQKPFQEYLEAQRQKLHHRSEMGTPQGENWLSWMFEKLVVVMVCYFILSIINSMAQSYAKRIQQRLDPKEKTK</sequence>
<protein>
    <recommendedName>
        <fullName evidence="4">Vacuole membrane protein 1</fullName>
    </recommendedName>
</protein>
<reference key="1">
    <citation type="submission" date="2006-08" db="EMBL/GenBank/DDBJ databases">
        <authorList>
            <consortium name="NIH - Mammalian Gene Collection (MGC) project"/>
        </authorList>
    </citation>
    <scope>NUCLEOTIDE SEQUENCE [LARGE SCALE MRNA]</scope>
    <source>
        <strain>Hereford</strain>
        <tissue>Fetal pons</tissue>
    </source>
</reference>
<dbReference type="EMBL" id="BC120116">
    <property type="protein sequence ID" value="AAI20117.1"/>
    <property type="molecule type" value="mRNA"/>
</dbReference>
<dbReference type="RefSeq" id="NP_001068836.1">
    <property type="nucleotide sequence ID" value="NM_001075368.2"/>
</dbReference>
<dbReference type="RefSeq" id="XP_005219942.1">
    <property type="nucleotide sequence ID" value="XM_005219885.5"/>
</dbReference>
<dbReference type="RefSeq" id="XP_005219943.1">
    <property type="nucleotide sequence ID" value="XM_005219886.5"/>
</dbReference>
<dbReference type="RefSeq" id="XP_005219944.1">
    <property type="nucleotide sequence ID" value="XM_005219887.3"/>
</dbReference>
<dbReference type="RefSeq" id="XP_059733856.1">
    <property type="nucleotide sequence ID" value="XM_059877873.1"/>
</dbReference>
<dbReference type="FunCoup" id="Q0VCK9">
    <property type="interactions" value="2128"/>
</dbReference>
<dbReference type="STRING" id="9913.ENSBTAP00000015439"/>
<dbReference type="PaxDb" id="9913-ENSBTAP00000015439"/>
<dbReference type="Ensembl" id="ENSBTAT00000015439.4">
    <property type="protein sequence ID" value="ENSBTAP00000015439.3"/>
    <property type="gene ID" value="ENSBTAG00000011623.7"/>
</dbReference>
<dbReference type="GeneID" id="508631"/>
<dbReference type="KEGG" id="bta:508631"/>
<dbReference type="CTD" id="81671"/>
<dbReference type="VEuPathDB" id="HostDB:ENSBTAG00000011623"/>
<dbReference type="VGNC" id="VGNC:36806">
    <property type="gene designation" value="VMP1"/>
</dbReference>
<dbReference type="eggNOG" id="KOG1109">
    <property type="taxonomic scope" value="Eukaryota"/>
</dbReference>
<dbReference type="GeneTree" id="ENSGT00390000007230"/>
<dbReference type="HOGENOM" id="CLU_033298_0_1_1"/>
<dbReference type="InParanoid" id="Q0VCK9"/>
<dbReference type="OMA" id="EEPYDKR"/>
<dbReference type="OrthoDB" id="2016540at2759"/>
<dbReference type="TreeFam" id="TF313699"/>
<dbReference type="Proteomes" id="UP000009136">
    <property type="component" value="Chromosome 19"/>
</dbReference>
<dbReference type="Bgee" id="ENSBTAG00000011623">
    <property type="expression patterns" value="Expressed in neutrophil and 105 other cell types or tissues"/>
</dbReference>
<dbReference type="GO" id="GO:0000421">
    <property type="term" value="C:autophagosome membrane"/>
    <property type="evidence" value="ECO:0000250"/>
    <property type="project" value="UniProtKB"/>
</dbReference>
<dbReference type="GO" id="GO:0012505">
    <property type="term" value="C:endomembrane system"/>
    <property type="evidence" value="ECO:0000318"/>
    <property type="project" value="GO_Central"/>
</dbReference>
<dbReference type="GO" id="GO:0005783">
    <property type="term" value="C:endoplasmic reticulum"/>
    <property type="evidence" value="ECO:0000250"/>
    <property type="project" value="UniProtKB"/>
</dbReference>
<dbReference type="GO" id="GO:0005789">
    <property type="term" value="C:endoplasmic reticulum membrane"/>
    <property type="evidence" value="ECO:0000250"/>
    <property type="project" value="UniProtKB"/>
</dbReference>
<dbReference type="GO" id="GO:0033116">
    <property type="term" value="C:endoplasmic reticulum-Golgi intermediate compartment membrane"/>
    <property type="evidence" value="ECO:0007669"/>
    <property type="project" value="UniProtKB-SubCell"/>
</dbReference>
<dbReference type="GO" id="GO:0016020">
    <property type="term" value="C:membrane"/>
    <property type="evidence" value="ECO:0000318"/>
    <property type="project" value="GO_Central"/>
</dbReference>
<dbReference type="GO" id="GO:0005730">
    <property type="term" value="C:nucleolus"/>
    <property type="evidence" value="ECO:0007669"/>
    <property type="project" value="Ensembl"/>
</dbReference>
<dbReference type="GO" id="GO:0000407">
    <property type="term" value="C:phagophore assembly site"/>
    <property type="evidence" value="ECO:0007669"/>
    <property type="project" value="Ensembl"/>
</dbReference>
<dbReference type="GO" id="GO:0005886">
    <property type="term" value="C:plasma membrane"/>
    <property type="evidence" value="ECO:0007669"/>
    <property type="project" value="UniProtKB-SubCell"/>
</dbReference>
<dbReference type="GO" id="GO:0017128">
    <property type="term" value="F:phospholipid scramblase activity"/>
    <property type="evidence" value="ECO:0000250"/>
    <property type="project" value="UniProtKB"/>
</dbReference>
<dbReference type="GO" id="GO:0000045">
    <property type="term" value="P:autophagosome assembly"/>
    <property type="evidence" value="ECO:0000250"/>
    <property type="project" value="UniProtKB"/>
</dbReference>
<dbReference type="GO" id="GO:0016240">
    <property type="term" value="P:autophagosome membrane docking"/>
    <property type="evidence" value="ECO:0000250"/>
    <property type="project" value="UniProtKB"/>
</dbReference>
<dbReference type="GO" id="GO:0006914">
    <property type="term" value="P:autophagy"/>
    <property type="evidence" value="ECO:0000250"/>
    <property type="project" value="UniProtKB"/>
</dbReference>
<dbReference type="GO" id="GO:0034329">
    <property type="term" value="P:cell junction assembly"/>
    <property type="evidence" value="ECO:0000250"/>
    <property type="project" value="UniProtKB"/>
</dbReference>
<dbReference type="GO" id="GO:0098609">
    <property type="term" value="P:cell-cell adhesion"/>
    <property type="evidence" value="ECO:0000250"/>
    <property type="project" value="UniProtKB"/>
</dbReference>
<dbReference type="GO" id="GO:0007566">
    <property type="term" value="P:embryo implantation"/>
    <property type="evidence" value="ECO:0007669"/>
    <property type="project" value="Ensembl"/>
</dbReference>
<dbReference type="GO" id="GO:0007030">
    <property type="term" value="P:Golgi organization"/>
    <property type="evidence" value="ECO:0000318"/>
    <property type="project" value="GO_Central"/>
</dbReference>
<dbReference type="GO" id="GO:0042953">
    <property type="term" value="P:lipoprotein transport"/>
    <property type="evidence" value="ECO:0000250"/>
    <property type="project" value="UniProtKB"/>
</dbReference>
<dbReference type="GO" id="GO:1990456">
    <property type="term" value="P:mitochondrion-endoplasmic reticulum membrane tethering"/>
    <property type="evidence" value="ECO:0000250"/>
    <property type="project" value="UniProtKB"/>
</dbReference>
<dbReference type="GO" id="GO:0140056">
    <property type="term" value="P:organelle localization by membrane tethering"/>
    <property type="evidence" value="ECO:0000250"/>
    <property type="project" value="UniProtKB"/>
</dbReference>
<dbReference type="GO" id="GO:1901896">
    <property type="term" value="P:positive regulation of ATPase-coupled calcium transmembrane transporter activity"/>
    <property type="evidence" value="ECO:0000250"/>
    <property type="project" value="UniProtKB"/>
</dbReference>
<comment type="function">
    <text evidence="1 2">Phospholipid scramblase involved in lipid homeostasis and membrane dynamics processes. Has phospholipid scramblase activity toward cholesterol and phosphatidylserine, as well as phosphatidylethanolamine and phosphatidylcholine. Required for autophagosome formation: participates in early stages of autophagosome biogenesis at the endoplasmic reticulum (ER) membrane by reequilibrating the leaflets of the ER as lipids are extracted by ATG2 (ATG2A or ATG2B) to mediate autophagosome assembly. Regulates ATP2A2 activity to control ER-isolation membrane contacts for autophagosome formation. In addition to autophagy, involved in other processes in which phospholipid scramblase activity is required. Modulates ER contacts with lipid droplets, mitochondria and endosomes. Plays an essential role in formation of cell junctions (By similarity). Upon stress such as bacterial and viral infection, promotes formation of cytoplasmic vacuoles followed by cell death. Involved in the cytoplasmic vacuolization of acinar cells during the early stage of acute pancreatitis (By similarity).</text>
</comment>
<comment type="catalytic activity">
    <reaction evidence="2">
        <text>a 1,2-diacyl-sn-glycero-3-phospho-L-serine(in) = a 1,2-diacyl-sn-glycero-3-phospho-L-serine(out)</text>
        <dbReference type="Rhea" id="RHEA:38663"/>
        <dbReference type="ChEBI" id="CHEBI:57262"/>
    </reaction>
</comment>
<comment type="catalytic activity">
    <reaction evidence="2">
        <text>cholesterol(in) = cholesterol(out)</text>
        <dbReference type="Rhea" id="RHEA:39747"/>
        <dbReference type="ChEBI" id="CHEBI:16113"/>
    </reaction>
</comment>
<comment type="catalytic activity">
    <reaction evidence="2">
        <text>a 1,2-diacyl-sn-glycero-3-phosphocholine(in) = a 1,2-diacyl-sn-glycero-3-phosphocholine(out)</text>
        <dbReference type="Rhea" id="RHEA:38571"/>
        <dbReference type="ChEBI" id="CHEBI:57643"/>
    </reaction>
</comment>
<comment type="catalytic activity">
    <reaction evidence="2">
        <text>a 1,2-diacyl-sn-glycero-3-phosphoethanolamine(in) = a 1,2-diacyl-sn-glycero-3-phosphoethanolamine(out)</text>
        <dbReference type="Rhea" id="RHEA:38895"/>
        <dbReference type="ChEBI" id="CHEBI:64612"/>
    </reaction>
</comment>
<comment type="subunit">
    <text evidence="1 2">Interacts with BECN1 (By similarity). Interacts with TJP1. Interacts with TP53INP2. Interacts with TMEM41B. Interacts with ATP2A2, PLN and SLN; competes with PLN and SLN to prevent them from forming an inhibitory complex with ATP2A2. Interacts with ATG2A (By similarity).</text>
</comment>
<comment type="subcellular location">
    <subcellularLocation>
        <location evidence="1">Endoplasmic reticulum-Golgi intermediate compartment membrane</location>
        <topology evidence="3">Multi-pass membrane protein</topology>
    </subcellularLocation>
    <subcellularLocation>
        <location evidence="2">Cell membrane</location>
        <topology evidence="3">Multi-pass membrane protein</topology>
    </subcellularLocation>
    <subcellularLocation>
        <location evidence="1">Vacuole membrane</location>
        <topology evidence="3">Multi-pass membrane protein</topology>
    </subcellularLocation>
    <subcellularLocation>
        <location evidence="2">Endoplasmic reticulum membrane</location>
        <topology evidence="3">Multi-pass membrane protein</topology>
    </subcellularLocation>
</comment>
<comment type="domain">
    <text evidence="2">The VTT domain was previously called the SNARE-assoc domain. As there is no evidence that this domain associates with SNARE proteins, it was renamed as VMP1, TMEM41, and TVP38 (VTT) domain.</text>
</comment>
<comment type="similarity">
    <text evidence="4">Belongs to the VMP1 family.</text>
</comment>
<keyword id="KW-0007">Acetylation</keyword>
<keyword id="KW-0072">Autophagy</keyword>
<keyword id="KW-0130">Cell adhesion</keyword>
<keyword id="KW-1003">Cell membrane</keyword>
<keyword id="KW-0256">Endoplasmic reticulum</keyword>
<keyword id="KW-0445">Lipid transport</keyword>
<keyword id="KW-0472">Membrane</keyword>
<keyword id="KW-1185">Reference proteome</keyword>
<keyword id="KW-0812">Transmembrane</keyword>
<keyword id="KW-1133">Transmembrane helix</keyword>
<keyword id="KW-0813">Transport</keyword>
<keyword id="KW-0926">Vacuole</keyword>
<proteinExistence type="evidence at transcript level"/>
<accession>Q0VCK9</accession>
<evidence type="ECO:0000250" key="1">
    <source>
        <dbReference type="UniProtKB" id="Q91ZQ0"/>
    </source>
</evidence>
<evidence type="ECO:0000250" key="2">
    <source>
        <dbReference type="UniProtKB" id="Q96GC9"/>
    </source>
</evidence>
<evidence type="ECO:0000255" key="3"/>
<evidence type="ECO:0000305" key="4"/>
<organism>
    <name type="scientific">Bos taurus</name>
    <name type="common">Bovine</name>
    <dbReference type="NCBI Taxonomy" id="9913"/>
    <lineage>
        <taxon>Eukaryota</taxon>
        <taxon>Metazoa</taxon>
        <taxon>Chordata</taxon>
        <taxon>Craniata</taxon>
        <taxon>Vertebrata</taxon>
        <taxon>Euteleostomi</taxon>
        <taxon>Mammalia</taxon>
        <taxon>Eutheria</taxon>
        <taxon>Laurasiatheria</taxon>
        <taxon>Artiodactyla</taxon>
        <taxon>Ruminantia</taxon>
        <taxon>Pecora</taxon>
        <taxon>Bovidae</taxon>
        <taxon>Bovinae</taxon>
        <taxon>Bos</taxon>
    </lineage>
</organism>